<comment type="function">
    <text evidence="1">Is an aliphatic amidase with a restricted substrate specificity, as it only hydrolyzes formamide.</text>
</comment>
<comment type="catalytic activity">
    <reaction evidence="1">
        <text>formamide + H2O = formate + NH4(+)</text>
        <dbReference type="Rhea" id="RHEA:21948"/>
        <dbReference type="ChEBI" id="CHEBI:15377"/>
        <dbReference type="ChEBI" id="CHEBI:15740"/>
        <dbReference type="ChEBI" id="CHEBI:16397"/>
        <dbReference type="ChEBI" id="CHEBI:28938"/>
        <dbReference type="EC" id="3.5.1.49"/>
    </reaction>
</comment>
<comment type="similarity">
    <text evidence="1">Belongs to the carbon-nitrogen hydrolase superfamily. Aliphatic amidase family.</text>
</comment>
<dbReference type="EC" id="3.5.1.49" evidence="1"/>
<dbReference type="EMBL" id="CP001217">
    <property type="protein sequence ID" value="ACJ08356.1"/>
    <property type="molecule type" value="Genomic_DNA"/>
</dbReference>
<dbReference type="SMR" id="B6JN78"/>
<dbReference type="KEGG" id="hpp:HPP12_1204"/>
<dbReference type="HOGENOM" id="CLU_071797_0_0_7"/>
<dbReference type="Proteomes" id="UP000008198">
    <property type="component" value="Chromosome"/>
</dbReference>
<dbReference type="GO" id="GO:0004328">
    <property type="term" value="F:formamidase activity"/>
    <property type="evidence" value="ECO:0007669"/>
    <property type="project" value="UniProtKB-UniRule"/>
</dbReference>
<dbReference type="GO" id="GO:0050126">
    <property type="term" value="F:N-carbamoylputrescine amidase activity"/>
    <property type="evidence" value="ECO:0007669"/>
    <property type="project" value="TreeGrafter"/>
</dbReference>
<dbReference type="GO" id="GO:0033388">
    <property type="term" value="P:putrescine biosynthetic process from arginine"/>
    <property type="evidence" value="ECO:0007669"/>
    <property type="project" value="TreeGrafter"/>
</dbReference>
<dbReference type="CDD" id="cd07565">
    <property type="entry name" value="aliphatic_amidase"/>
    <property type="match status" value="1"/>
</dbReference>
<dbReference type="Gene3D" id="3.60.110.10">
    <property type="entry name" value="Carbon-nitrogen hydrolase"/>
    <property type="match status" value="1"/>
</dbReference>
<dbReference type="HAMAP" id="MF_01243">
    <property type="entry name" value="Formamidase"/>
    <property type="match status" value="1"/>
</dbReference>
<dbReference type="InterPro" id="IPR050345">
    <property type="entry name" value="Aliph_Amidase/BUP"/>
</dbReference>
<dbReference type="InterPro" id="IPR003010">
    <property type="entry name" value="C-N_Hydrolase"/>
</dbReference>
<dbReference type="InterPro" id="IPR036526">
    <property type="entry name" value="C-N_Hydrolase_sf"/>
</dbReference>
<dbReference type="InterPro" id="IPR022843">
    <property type="entry name" value="Formamidase"/>
</dbReference>
<dbReference type="NCBIfam" id="NF009803">
    <property type="entry name" value="PRK13287.1"/>
    <property type="match status" value="1"/>
</dbReference>
<dbReference type="PANTHER" id="PTHR43674:SF15">
    <property type="entry name" value="FORMAMIDASE"/>
    <property type="match status" value="1"/>
</dbReference>
<dbReference type="PANTHER" id="PTHR43674">
    <property type="entry name" value="NITRILASE C965.09-RELATED"/>
    <property type="match status" value="1"/>
</dbReference>
<dbReference type="Pfam" id="PF00795">
    <property type="entry name" value="CN_hydrolase"/>
    <property type="match status" value="1"/>
</dbReference>
<dbReference type="SUPFAM" id="SSF56317">
    <property type="entry name" value="Carbon-nitrogen hydrolase"/>
    <property type="match status" value="1"/>
</dbReference>
<dbReference type="PROSITE" id="PS50263">
    <property type="entry name" value="CN_HYDROLASE"/>
    <property type="match status" value="1"/>
</dbReference>
<proteinExistence type="inferred from homology"/>
<evidence type="ECO:0000255" key="1">
    <source>
        <dbReference type="HAMAP-Rule" id="MF_01243"/>
    </source>
</evidence>
<evidence type="ECO:0000255" key="2">
    <source>
        <dbReference type="PROSITE-ProRule" id="PRU00054"/>
    </source>
</evidence>
<name>AMIF_HELP2</name>
<organism>
    <name type="scientific">Helicobacter pylori (strain P12)</name>
    <dbReference type="NCBI Taxonomy" id="570508"/>
    <lineage>
        <taxon>Bacteria</taxon>
        <taxon>Pseudomonadati</taxon>
        <taxon>Campylobacterota</taxon>
        <taxon>Epsilonproteobacteria</taxon>
        <taxon>Campylobacterales</taxon>
        <taxon>Helicobacteraceae</taxon>
        <taxon>Helicobacter</taxon>
    </lineage>
</organism>
<gene>
    <name evidence="1" type="primary">amiF</name>
    <name type="ordered locus">HPP12_1204</name>
</gene>
<accession>B6JN78</accession>
<keyword id="KW-0378">Hydrolase</keyword>
<protein>
    <recommendedName>
        <fullName evidence="1">Formamidase</fullName>
        <ecNumber evidence="1">3.5.1.49</ecNumber>
    </recommendedName>
    <alternativeName>
        <fullName evidence="1">Formamide amidohydrolase</fullName>
    </alternativeName>
</protein>
<feature type="chain" id="PRO_1000139813" description="Formamidase">
    <location>
        <begin position="1"/>
        <end position="334"/>
    </location>
</feature>
<feature type="domain" description="CN hydrolase" evidence="2">
    <location>
        <begin position="14"/>
        <end position="260"/>
    </location>
</feature>
<feature type="active site" description="Proton acceptor" evidence="1">
    <location>
        <position position="60"/>
    </location>
</feature>
<feature type="active site" description="Proton donor" evidence="1">
    <location>
        <position position="133"/>
    </location>
</feature>
<feature type="active site" description="Nucleophile" evidence="1">
    <location>
        <position position="166"/>
    </location>
</feature>
<sequence>MGSIGSMGKPIEGFLVAAIQFPVPIVNSRKDIDHNIESIIRTLHATKAGYPGVELIIFPEYSTQGLNTAKWLSEEFLLDVPGKETEAYAQACKEAKVYGVFSIMERNPDSNKNPYNTAIIIDPQGKIILKYRKLFPWNPIEPWYPGDLGMPVCEGPGGSKLAVCICHDGMIPELAREAAYKGCNVYIRISGYSTQVNDQWILTNRSNAWHNLMYTVSVNLAGYDNVFYYFGEGQICNFDGTTLVQGHRNPWEIVTGEIYPKMADNARLSWGLENNIYNLGHRGYVAKPGGEHDAGLTYIKDLAAGKYKLPWEDHMKIKDGSIYGYPTTGGRFGK</sequence>
<reference key="1">
    <citation type="submission" date="2008-10" db="EMBL/GenBank/DDBJ databases">
        <title>The complete genome sequence of Helicobacter pylori strain P12.</title>
        <authorList>
            <person name="Fischer W."/>
            <person name="Windhager L."/>
            <person name="Karnholz A."/>
            <person name="Zeiller M."/>
            <person name="Zimmer R."/>
            <person name="Haas R."/>
        </authorList>
    </citation>
    <scope>NUCLEOTIDE SEQUENCE [LARGE SCALE GENOMIC DNA]</scope>
    <source>
        <strain>P12</strain>
    </source>
</reference>